<dbReference type="EMBL" id="BA000040">
    <property type="protein sequence ID" value="BAC45455.1"/>
    <property type="molecule type" value="Genomic_DNA"/>
</dbReference>
<dbReference type="RefSeq" id="NP_766830.1">
    <property type="nucleotide sequence ID" value="NC_004463.1"/>
</dbReference>
<dbReference type="RefSeq" id="WP_011083022.1">
    <property type="nucleotide sequence ID" value="NC_004463.1"/>
</dbReference>
<dbReference type="SMR" id="Q89XW5"/>
<dbReference type="FunCoup" id="Q89XW5">
    <property type="interactions" value="233"/>
</dbReference>
<dbReference type="STRING" id="224911.AAV28_40200"/>
<dbReference type="EnsemblBacteria" id="BAC45455">
    <property type="protein sequence ID" value="BAC45455"/>
    <property type="gene ID" value="BAC45455"/>
</dbReference>
<dbReference type="GeneID" id="46495343"/>
<dbReference type="KEGG" id="bja:blr0190"/>
<dbReference type="PATRIC" id="fig|224911.44.peg.8711"/>
<dbReference type="eggNOG" id="COG4974">
    <property type="taxonomic scope" value="Bacteria"/>
</dbReference>
<dbReference type="HOGENOM" id="CLU_027562_9_0_5"/>
<dbReference type="InParanoid" id="Q89XW5"/>
<dbReference type="OrthoDB" id="9801717at2"/>
<dbReference type="PhylomeDB" id="Q89XW5"/>
<dbReference type="Proteomes" id="UP000002526">
    <property type="component" value="Chromosome"/>
</dbReference>
<dbReference type="GO" id="GO:0005737">
    <property type="term" value="C:cytoplasm"/>
    <property type="evidence" value="ECO:0007669"/>
    <property type="project" value="UniProtKB-SubCell"/>
</dbReference>
<dbReference type="GO" id="GO:0048476">
    <property type="term" value="C:Holliday junction resolvase complex"/>
    <property type="evidence" value="ECO:0000318"/>
    <property type="project" value="GO_Central"/>
</dbReference>
<dbReference type="GO" id="GO:0003677">
    <property type="term" value="F:DNA binding"/>
    <property type="evidence" value="ECO:0000318"/>
    <property type="project" value="GO_Central"/>
</dbReference>
<dbReference type="GO" id="GO:0009037">
    <property type="term" value="F:tyrosine-based site-specific recombinase activity"/>
    <property type="evidence" value="ECO:0000318"/>
    <property type="project" value="GO_Central"/>
</dbReference>
<dbReference type="GO" id="GO:0051301">
    <property type="term" value="P:cell division"/>
    <property type="evidence" value="ECO:0007669"/>
    <property type="project" value="UniProtKB-KW"/>
</dbReference>
<dbReference type="GO" id="GO:0007059">
    <property type="term" value="P:chromosome segregation"/>
    <property type="evidence" value="ECO:0000318"/>
    <property type="project" value="GO_Central"/>
</dbReference>
<dbReference type="GO" id="GO:0006310">
    <property type="term" value="P:DNA recombination"/>
    <property type="evidence" value="ECO:0000318"/>
    <property type="project" value="GO_Central"/>
</dbReference>
<dbReference type="GO" id="GO:0006313">
    <property type="term" value="P:DNA transposition"/>
    <property type="evidence" value="ECO:0007669"/>
    <property type="project" value="UniProtKB-UniRule"/>
</dbReference>
<dbReference type="GO" id="GO:0071139">
    <property type="term" value="P:resolution of DNA recombination intermediates"/>
    <property type="evidence" value="ECO:0000318"/>
    <property type="project" value="GO_Central"/>
</dbReference>
<dbReference type="Gene3D" id="1.10.150.130">
    <property type="match status" value="1"/>
</dbReference>
<dbReference type="Gene3D" id="1.10.443.10">
    <property type="entry name" value="Intergrase catalytic core"/>
    <property type="match status" value="1"/>
</dbReference>
<dbReference type="HAMAP" id="MF_01808">
    <property type="entry name" value="Recomb_XerC_XerD"/>
    <property type="match status" value="1"/>
</dbReference>
<dbReference type="HAMAP" id="MF_01807">
    <property type="entry name" value="Recomb_XerD"/>
    <property type="match status" value="1"/>
</dbReference>
<dbReference type="InterPro" id="IPR044068">
    <property type="entry name" value="CB"/>
</dbReference>
<dbReference type="InterPro" id="IPR011010">
    <property type="entry name" value="DNA_brk_join_enz"/>
</dbReference>
<dbReference type="InterPro" id="IPR013762">
    <property type="entry name" value="Integrase-like_cat_sf"/>
</dbReference>
<dbReference type="InterPro" id="IPR002104">
    <property type="entry name" value="Integrase_catalytic"/>
</dbReference>
<dbReference type="InterPro" id="IPR010998">
    <property type="entry name" value="Integrase_recombinase_N"/>
</dbReference>
<dbReference type="InterPro" id="IPR004107">
    <property type="entry name" value="Integrase_SAM-like_N"/>
</dbReference>
<dbReference type="InterPro" id="IPR011932">
    <property type="entry name" value="Recomb_XerD"/>
</dbReference>
<dbReference type="InterPro" id="IPR023009">
    <property type="entry name" value="Tyrosine_recombinase_XerC/XerD"/>
</dbReference>
<dbReference type="InterPro" id="IPR050090">
    <property type="entry name" value="Tyrosine_recombinase_XerCD"/>
</dbReference>
<dbReference type="NCBIfam" id="NF001399">
    <property type="entry name" value="PRK00283.1"/>
    <property type="match status" value="1"/>
</dbReference>
<dbReference type="NCBIfam" id="TIGR02225">
    <property type="entry name" value="recomb_XerD"/>
    <property type="match status" value="1"/>
</dbReference>
<dbReference type="PANTHER" id="PTHR30349">
    <property type="entry name" value="PHAGE INTEGRASE-RELATED"/>
    <property type="match status" value="1"/>
</dbReference>
<dbReference type="PANTHER" id="PTHR30349:SF90">
    <property type="entry name" value="TYROSINE RECOMBINASE XERD"/>
    <property type="match status" value="1"/>
</dbReference>
<dbReference type="Pfam" id="PF02899">
    <property type="entry name" value="Phage_int_SAM_1"/>
    <property type="match status" value="1"/>
</dbReference>
<dbReference type="Pfam" id="PF00589">
    <property type="entry name" value="Phage_integrase"/>
    <property type="match status" value="1"/>
</dbReference>
<dbReference type="SUPFAM" id="SSF56349">
    <property type="entry name" value="DNA breaking-rejoining enzymes"/>
    <property type="match status" value="1"/>
</dbReference>
<dbReference type="PROSITE" id="PS51900">
    <property type="entry name" value="CB"/>
    <property type="match status" value="1"/>
</dbReference>
<dbReference type="PROSITE" id="PS51898">
    <property type="entry name" value="TYR_RECOMBINASE"/>
    <property type="match status" value="1"/>
</dbReference>
<name>XERD_BRADU</name>
<protein>
    <recommendedName>
        <fullName evidence="1">Tyrosine recombinase XerD</fullName>
    </recommendedName>
</protein>
<proteinExistence type="inferred from homology"/>
<accession>Q89XW5</accession>
<evidence type="ECO:0000255" key="1">
    <source>
        <dbReference type="HAMAP-Rule" id="MF_01807"/>
    </source>
</evidence>
<evidence type="ECO:0000255" key="2">
    <source>
        <dbReference type="PROSITE-ProRule" id="PRU01246"/>
    </source>
</evidence>
<evidence type="ECO:0000255" key="3">
    <source>
        <dbReference type="PROSITE-ProRule" id="PRU01248"/>
    </source>
</evidence>
<feature type="chain" id="PRO_0000095373" description="Tyrosine recombinase XerD">
    <location>
        <begin position="1"/>
        <end position="318"/>
    </location>
</feature>
<feature type="domain" description="Core-binding (CB)" evidence="3">
    <location>
        <begin position="5"/>
        <end position="90"/>
    </location>
</feature>
<feature type="domain" description="Tyr recombinase" evidence="2">
    <location>
        <begin position="111"/>
        <end position="310"/>
    </location>
</feature>
<feature type="active site" evidence="1">
    <location>
        <position position="161"/>
    </location>
</feature>
<feature type="active site" evidence="1">
    <location>
        <position position="185"/>
    </location>
</feature>
<feature type="active site" evidence="1">
    <location>
        <position position="262"/>
    </location>
</feature>
<feature type="active site" evidence="1">
    <location>
        <position position="265"/>
    </location>
</feature>
<feature type="active site" evidence="1">
    <location>
        <position position="288"/>
    </location>
</feature>
<feature type="active site" description="O-(3'-phospho-DNA)-tyrosine intermediate" evidence="1">
    <location>
        <position position="297"/>
    </location>
</feature>
<organism>
    <name type="scientific">Bradyrhizobium diazoefficiens (strain JCM 10833 / BCRC 13528 / IAM 13628 / NBRC 14792 / USDA 110)</name>
    <dbReference type="NCBI Taxonomy" id="224911"/>
    <lineage>
        <taxon>Bacteria</taxon>
        <taxon>Pseudomonadati</taxon>
        <taxon>Pseudomonadota</taxon>
        <taxon>Alphaproteobacteria</taxon>
        <taxon>Hyphomicrobiales</taxon>
        <taxon>Nitrobacteraceae</taxon>
        <taxon>Bradyrhizobium</taxon>
    </lineage>
</organism>
<keyword id="KW-0131">Cell cycle</keyword>
<keyword id="KW-0132">Cell division</keyword>
<keyword id="KW-0159">Chromosome partition</keyword>
<keyword id="KW-0963">Cytoplasm</keyword>
<keyword id="KW-0229">DNA integration</keyword>
<keyword id="KW-0233">DNA recombination</keyword>
<keyword id="KW-0238">DNA-binding</keyword>
<keyword id="KW-1185">Reference proteome</keyword>
<comment type="function">
    <text evidence="1">Site-specific tyrosine recombinase, which acts by catalyzing the cutting and rejoining of the recombining DNA molecules. The XerC-XerD complex is essential to convert dimers of the bacterial chromosome into monomers to permit their segregation at cell division. It also contributes to the segregational stability of plasmids.</text>
</comment>
<comment type="subunit">
    <text evidence="1">Forms a cyclic heterotetrameric complex composed of two molecules of XerC and two molecules of XerD.</text>
</comment>
<comment type="subcellular location">
    <subcellularLocation>
        <location evidence="1">Cytoplasm</location>
    </subcellularLocation>
</comment>
<comment type="similarity">
    <text evidence="1">Belongs to the 'phage' integrase family. XerD subfamily.</text>
</comment>
<gene>
    <name evidence="1" type="primary">xerD</name>
    <name type="ordered locus">blr0190</name>
</gene>
<reference key="1">
    <citation type="journal article" date="2002" name="DNA Res.">
        <title>Complete genomic sequence of nitrogen-fixing symbiotic bacterium Bradyrhizobium japonicum USDA110.</title>
        <authorList>
            <person name="Kaneko T."/>
            <person name="Nakamura Y."/>
            <person name="Sato S."/>
            <person name="Minamisawa K."/>
            <person name="Uchiumi T."/>
            <person name="Sasamoto S."/>
            <person name="Watanabe A."/>
            <person name="Idesawa K."/>
            <person name="Iriguchi M."/>
            <person name="Kawashima K."/>
            <person name="Kohara M."/>
            <person name="Matsumoto M."/>
            <person name="Shimpo S."/>
            <person name="Tsuruoka H."/>
            <person name="Wada T."/>
            <person name="Yamada M."/>
            <person name="Tabata S."/>
        </authorList>
    </citation>
    <scope>NUCLEOTIDE SEQUENCE [LARGE SCALE GENOMIC DNA]</scope>
    <source>
        <strain>JCM 10833 / BCRC 13528 / IAM 13628 / NBRC 14792 / USDA 110</strain>
    </source>
</reference>
<sequence>MRAKPSDAKLTGLFLDMLAAEQGAGPNTLDAYRRDLTDFSEFLGRVGHSFADAETQTLRDYLADLDTRGFKSTSVARRLSAMRHLYRFLLNERIRGDDPAAILSGPKRGRGLPKVLSIADVDRMLRRARELSEAEDASPSKRLRALRLYCLLEVLYATGLRVSELVALPRTAAKRDARMIVVRGKGNKERLVPLNEASRQAMADYLAATEAAKSDKKTGVAASKWLFPSFGESGHLTRQHFARDLKELAVASGLQARLVSPHVLRHAFASHLLHNGADLRIVQTLLGHTDISTTQIYTHVVEERLKSLVRDLHPLAEK</sequence>